<proteinExistence type="inferred from homology"/>
<sequence>MKHTIAVLVENKPGVLARVAGLFRRRGFNIESLTVGTTERDDLSRMTIVVEGDDKVVEQVIKQLNKLIETIKVSEITESSVERELCLIRVHAPPEKRGEIVELTNIFRARIVDVSRDSFIIEVTGDEDKVSAFIDLMRQYGIKELARTGKVAMVRGNKK</sequence>
<feature type="chain" id="PRO_0000151422" description="Probable acetolactate synthase small subunit">
    <location>
        <begin position="1"/>
        <end position="159"/>
    </location>
</feature>
<feature type="domain" description="ACT" evidence="2">
    <location>
        <begin position="4"/>
        <end position="78"/>
    </location>
</feature>
<comment type="catalytic activity">
    <reaction>
        <text>2 pyruvate + H(+) = (2S)-2-acetolactate + CO2</text>
        <dbReference type="Rhea" id="RHEA:25249"/>
        <dbReference type="ChEBI" id="CHEBI:15361"/>
        <dbReference type="ChEBI" id="CHEBI:15378"/>
        <dbReference type="ChEBI" id="CHEBI:16526"/>
        <dbReference type="ChEBI" id="CHEBI:58476"/>
        <dbReference type="EC" id="2.2.1.6"/>
    </reaction>
</comment>
<comment type="pathway">
    <text>Amino-acid biosynthesis; L-isoleucine biosynthesis; L-isoleucine from 2-oxobutanoate: step 1/4.</text>
</comment>
<comment type="pathway">
    <text>Amino-acid biosynthesis; L-valine biosynthesis; L-valine from pyruvate: step 1/4.</text>
</comment>
<comment type="subunit">
    <text evidence="1">Dimer of large and small chains.</text>
</comment>
<comment type="similarity">
    <text evidence="3">Belongs to the acetolactate synthase small subunit family.</text>
</comment>
<name>ILVH_ARCFU</name>
<dbReference type="EC" id="2.2.1.6"/>
<dbReference type="EMBL" id="AE000782">
    <property type="protein sequence ID" value="AAB89532.1"/>
    <property type="molecule type" value="Genomic_DNA"/>
</dbReference>
<dbReference type="PIR" id="F69464">
    <property type="entry name" value="F69464"/>
</dbReference>
<dbReference type="RefSeq" id="WP_010879215.1">
    <property type="nucleotide sequence ID" value="NC_000917.1"/>
</dbReference>
<dbReference type="SMR" id="O28555"/>
<dbReference type="STRING" id="224325.AF_1719"/>
<dbReference type="PaxDb" id="224325-AF_1719"/>
<dbReference type="EnsemblBacteria" id="AAB89532">
    <property type="protein sequence ID" value="AAB89532"/>
    <property type="gene ID" value="AF_1719"/>
</dbReference>
<dbReference type="GeneID" id="24795463"/>
<dbReference type="KEGG" id="afu:AF_1719"/>
<dbReference type="eggNOG" id="arCOG04445">
    <property type="taxonomic scope" value="Archaea"/>
</dbReference>
<dbReference type="HOGENOM" id="CLU_055003_1_3_2"/>
<dbReference type="OrthoDB" id="85792at2157"/>
<dbReference type="PhylomeDB" id="O28555"/>
<dbReference type="UniPathway" id="UPA00047">
    <property type="reaction ID" value="UER00055"/>
</dbReference>
<dbReference type="UniPathway" id="UPA00049">
    <property type="reaction ID" value="UER00059"/>
</dbReference>
<dbReference type="Proteomes" id="UP000002199">
    <property type="component" value="Chromosome"/>
</dbReference>
<dbReference type="GO" id="GO:0005829">
    <property type="term" value="C:cytosol"/>
    <property type="evidence" value="ECO:0007669"/>
    <property type="project" value="TreeGrafter"/>
</dbReference>
<dbReference type="GO" id="GO:0003984">
    <property type="term" value="F:acetolactate synthase activity"/>
    <property type="evidence" value="ECO:0007669"/>
    <property type="project" value="UniProtKB-EC"/>
</dbReference>
<dbReference type="GO" id="GO:1990610">
    <property type="term" value="F:acetolactate synthase regulator activity"/>
    <property type="evidence" value="ECO:0007669"/>
    <property type="project" value="InterPro"/>
</dbReference>
<dbReference type="GO" id="GO:0009097">
    <property type="term" value="P:isoleucine biosynthetic process"/>
    <property type="evidence" value="ECO:0007669"/>
    <property type="project" value="UniProtKB-UniPathway"/>
</dbReference>
<dbReference type="GO" id="GO:0009099">
    <property type="term" value="P:L-valine biosynthetic process"/>
    <property type="evidence" value="ECO:0007669"/>
    <property type="project" value="UniProtKB-UniPathway"/>
</dbReference>
<dbReference type="CDD" id="cd04878">
    <property type="entry name" value="ACT_AHAS"/>
    <property type="match status" value="1"/>
</dbReference>
<dbReference type="FunFam" id="3.30.70.1150:FF:000001">
    <property type="entry name" value="Acetolactate synthase small subunit"/>
    <property type="match status" value="1"/>
</dbReference>
<dbReference type="FunFam" id="3.30.70.260:FF:000001">
    <property type="entry name" value="Acetolactate synthase, small subunit"/>
    <property type="match status" value="1"/>
</dbReference>
<dbReference type="Gene3D" id="3.30.70.260">
    <property type="match status" value="1"/>
</dbReference>
<dbReference type="Gene3D" id="3.30.70.1150">
    <property type="entry name" value="ACT-like. Chain A, domain 2"/>
    <property type="match status" value="1"/>
</dbReference>
<dbReference type="InterPro" id="IPR004789">
    <property type="entry name" value="Acetalactate_synth_ssu"/>
</dbReference>
<dbReference type="InterPro" id="IPR027271">
    <property type="entry name" value="Acetolactate_synth/TF_NikR_C"/>
</dbReference>
<dbReference type="InterPro" id="IPR019455">
    <property type="entry name" value="Acetolactate_synth_ssu_C"/>
</dbReference>
<dbReference type="InterPro" id="IPR045865">
    <property type="entry name" value="ACT-like_dom_sf"/>
</dbReference>
<dbReference type="InterPro" id="IPR002912">
    <property type="entry name" value="ACT_dom"/>
</dbReference>
<dbReference type="InterPro" id="IPR039557">
    <property type="entry name" value="AHAS_ACT"/>
</dbReference>
<dbReference type="InterPro" id="IPR054480">
    <property type="entry name" value="AHAS_small-like_ACT"/>
</dbReference>
<dbReference type="NCBIfam" id="TIGR00119">
    <property type="entry name" value="acolac_sm"/>
    <property type="match status" value="1"/>
</dbReference>
<dbReference type="NCBIfam" id="NF008864">
    <property type="entry name" value="PRK11895.1"/>
    <property type="match status" value="1"/>
</dbReference>
<dbReference type="PANTHER" id="PTHR30239">
    <property type="entry name" value="ACETOLACTATE SYNTHASE SMALL SUBUNIT"/>
    <property type="match status" value="1"/>
</dbReference>
<dbReference type="PANTHER" id="PTHR30239:SF0">
    <property type="entry name" value="ACETOLACTATE SYNTHASE SMALL SUBUNIT 1, CHLOROPLASTIC"/>
    <property type="match status" value="1"/>
</dbReference>
<dbReference type="Pfam" id="PF22629">
    <property type="entry name" value="ACT_AHAS_ss"/>
    <property type="match status" value="1"/>
</dbReference>
<dbReference type="Pfam" id="PF10369">
    <property type="entry name" value="ALS_ss_C"/>
    <property type="match status" value="1"/>
</dbReference>
<dbReference type="SUPFAM" id="SSF55021">
    <property type="entry name" value="ACT-like"/>
    <property type="match status" value="2"/>
</dbReference>
<dbReference type="PROSITE" id="PS51671">
    <property type="entry name" value="ACT"/>
    <property type="match status" value="1"/>
</dbReference>
<protein>
    <recommendedName>
        <fullName>Probable acetolactate synthase small subunit</fullName>
        <ecNumber>2.2.1.6</ecNumber>
    </recommendedName>
    <alternativeName>
        <fullName>Acetohydroxy-acid synthase small subunit</fullName>
        <shortName>AHAS</shortName>
        <shortName>ALS</shortName>
    </alternativeName>
</protein>
<gene>
    <name type="primary">ilvH</name>
    <name type="synonym">ilvN</name>
    <name type="ordered locus">AF_1719</name>
</gene>
<organism>
    <name type="scientific">Archaeoglobus fulgidus (strain ATCC 49558 / DSM 4304 / JCM 9628 / NBRC 100126 / VC-16)</name>
    <dbReference type="NCBI Taxonomy" id="224325"/>
    <lineage>
        <taxon>Archaea</taxon>
        <taxon>Methanobacteriati</taxon>
        <taxon>Methanobacteriota</taxon>
        <taxon>Archaeoglobi</taxon>
        <taxon>Archaeoglobales</taxon>
        <taxon>Archaeoglobaceae</taxon>
        <taxon>Archaeoglobus</taxon>
    </lineage>
</organism>
<keyword id="KW-0028">Amino-acid biosynthesis</keyword>
<keyword id="KW-0100">Branched-chain amino acid biosynthesis</keyword>
<keyword id="KW-1185">Reference proteome</keyword>
<keyword id="KW-0808">Transferase</keyword>
<accession>O28555</accession>
<evidence type="ECO:0000250" key="1"/>
<evidence type="ECO:0000255" key="2">
    <source>
        <dbReference type="PROSITE-ProRule" id="PRU01007"/>
    </source>
</evidence>
<evidence type="ECO:0000305" key="3"/>
<reference key="1">
    <citation type="journal article" date="1997" name="Nature">
        <title>The complete genome sequence of the hyperthermophilic, sulphate-reducing archaeon Archaeoglobus fulgidus.</title>
        <authorList>
            <person name="Klenk H.-P."/>
            <person name="Clayton R.A."/>
            <person name="Tomb J.-F."/>
            <person name="White O."/>
            <person name="Nelson K.E."/>
            <person name="Ketchum K.A."/>
            <person name="Dodson R.J."/>
            <person name="Gwinn M.L."/>
            <person name="Hickey E.K."/>
            <person name="Peterson J.D."/>
            <person name="Richardson D.L."/>
            <person name="Kerlavage A.R."/>
            <person name="Graham D.E."/>
            <person name="Kyrpides N.C."/>
            <person name="Fleischmann R.D."/>
            <person name="Quackenbush J."/>
            <person name="Lee N.H."/>
            <person name="Sutton G.G."/>
            <person name="Gill S.R."/>
            <person name="Kirkness E.F."/>
            <person name="Dougherty B.A."/>
            <person name="McKenney K."/>
            <person name="Adams M.D."/>
            <person name="Loftus B.J."/>
            <person name="Peterson S.N."/>
            <person name="Reich C.I."/>
            <person name="McNeil L.K."/>
            <person name="Badger J.H."/>
            <person name="Glodek A."/>
            <person name="Zhou L."/>
            <person name="Overbeek R."/>
            <person name="Gocayne J.D."/>
            <person name="Weidman J.F."/>
            <person name="McDonald L.A."/>
            <person name="Utterback T.R."/>
            <person name="Cotton M.D."/>
            <person name="Spriggs T."/>
            <person name="Artiach P."/>
            <person name="Kaine B.P."/>
            <person name="Sykes S.M."/>
            <person name="Sadow P.W."/>
            <person name="D'Andrea K.P."/>
            <person name="Bowman C."/>
            <person name="Fujii C."/>
            <person name="Garland S.A."/>
            <person name="Mason T.M."/>
            <person name="Olsen G.J."/>
            <person name="Fraser C.M."/>
            <person name="Smith H.O."/>
            <person name="Woese C.R."/>
            <person name="Venter J.C."/>
        </authorList>
    </citation>
    <scope>NUCLEOTIDE SEQUENCE [LARGE SCALE GENOMIC DNA]</scope>
    <source>
        <strain>ATCC 49558 / DSM 4304 / JCM 9628 / NBRC 100126 / VC-16</strain>
    </source>
</reference>